<organism>
    <name type="scientific">Francisella tularensis subsp. tularensis (strain SCHU S4 / Schu 4)</name>
    <dbReference type="NCBI Taxonomy" id="177416"/>
    <lineage>
        <taxon>Bacteria</taxon>
        <taxon>Pseudomonadati</taxon>
        <taxon>Pseudomonadota</taxon>
        <taxon>Gammaproteobacteria</taxon>
        <taxon>Thiotrichales</taxon>
        <taxon>Francisellaceae</taxon>
        <taxon>Francisella</taxon>
    </lineage>
</organism>
<proteinExistence type="inferred from homology"/>
<keyword id="KW-0963">Cytoplasm</keyword>
<keyword id="KW-0448">Lipopolysaccharide biosynthesis</keyword>
<keyword id="KW-0548">Nucleotidyltransferase</keyword>
<keyword id="KW-1185">Reference proteome</keyword>
<keyword id="KW-0808">Transferase</keyword>
<gene>
    <name evidence="1" type="primary">kdsB</name>
    <name type="ordered locus">FTT_1478c</name>
</gene>
<evidence type="ECO:0000255" key="1">
    <source>
        <dbReference type="HAMAP-Rule" id="MF_00057"/>
    </source>
</evidence>
<comment type="function">
    <text evidence="1">Activates KDO (a required 8-carbon sugar) for incorporation into bacterial lipopolysaccharide in Gram-negative bacteria.</text>
</comment>
<comment type="catalytic activity">
    <reaction evidence="1">
        <text>3-deoxy-alpha-D-manno-oct-2-ulosonate + CTP = CMP-3-deoxy-beta-D-manno-octulosonate + diphosphate</text>
        <dbReference type="Rhea" id="RHEA:23448"/>
        <dbReference type="ChEBI" id="CHEBI:33019"/>
        <dbReference type="ChEBI" id="CHEBI:37563"/>
        <dbReference type="ChEBI" id="CHEBI:85986"/>
        <dbReference type="ChEBI" id="CHEBI:85987"/>
        <dbReference type="EC" id="2.7.7.38"/>
    </reaction>
</comment>
<comment type="pathway">
    <text evidence="1">Nucleotide-sugar biosynthesis; CMP-3-deoxy-D-manno-octulosonate biosynthesis; CMP-3-deoxy-D-manno-octulosonate from 3-deoxy-D-manno-octulosonate and CTP: step 1/1.</text>
</comment>
<comment type="pathway">
    <text evidence="1">Bacterial outer membrane biogenesis; lipopolysaccharide biosynthesis.</text>
</comment>
<comment type="subcellular location">
    <subcellularLocation>
        <location evidence="1">Cytoplasm</location>
    </subcellularLocation>
</comment>
<comment type="similarity">
    <text evidence="1">Belongs to the KdsB family.</text>
</comment>
<protein>
    <recommendedName>
        <fullName evidence="1">3-deoxy-manno-octulosonate cytidylyltransferase</fullName>
        <ecNumber evidence="1">2.7.7.38</ecNumber>
    </recommendedName>
    <alternativeName>
        <fullName evidence="1">CMP-2-keto-3-deoxyoctulosonic acid synthase</fullName>
        <shortName evidence="1">CKS</shortName>
        <shortName evidence="1">CMP-KDO synthase</shortName>
    </alternativeName>
</protein>
<sequence>MANIHIVIPARLKSTRLPNKMLADIAGKPMIQRVYEQVTKSKFDSIIIATDSQKIKDIAKSFGAKVVLTRDDHQSGTDRIAEAVTKLGFADEDIVVNVQGDEPLIPIENIEQAAQLLIDKSEAVVSTLCEKITDVEDIYNPNNVKVVFDKNNYALYFSRASIPFERGFSEKEQINISEFFRHIGIYAYRVAFLKHYAELTVSPIEKYEALEQLKVLYNGYKIAIEQSAKSTPAGVDTLQDLEKVRKLFNV</sequence>
<reference key="1">
    <citation type="journal article" date="2005" name="Nat. Genet.">
        <title>The complete genome sequence of Francisella tularensis, the causative agent of tularemia.</title>
        <authorList>
            <person name="Larsson P."/>
            <person name="Oyston P.C.F."/>
            <person name="Chain P."/>
            <person name="Chu M.C."/>
            <person name="Duffield M."/>
            <person name="Fuxelius H.-H."/>
            <person name="Garcia E."/>
            <person name="Haelltorp G."/>
            <person name="Johansson D."/>
            <person name="Isherwood K.E."/>
            <person name="Karp P.D."/>
            <person name="Larsson E."/>
            <person name="Liu Y."/>
            <person name="Michell S."/>
            <person name="Prior J."/>
            <person name="Prior R."/>
            <person name="Malfatti S."/>
            <person name="Sjoestedt A."/>
            <person name="Svensson K."/>
            <person name="Thompson N."/>
            <person name="Vergez L."/>
            <person name="Wagg J.K."/>
            <person name="Wren B.W."/>
            <person name="Lindler L.E."/>
            <person name="Andersson S.G.E."/>
            <person name="Forsman M."/>
            <person name="Titball R.W."/>
        </authorList>
    </citation>
    <scope>NUCLEOTIDE SEQUENCE [LARGE SCALE GENOMIC DNA]</scope>
    <source>
        <strain>SCHU S4 / Schu 4</strain>
    </source>
</reference>
<reference key="2">
    <citation type="submission" date="2009-05" db="EMBL/GenBank/DDBJ databases">
        <authorList>
            <person name="Duffield M."/>
        </authorList>
    </citation>
    <scope>SEQUENCE REVISION TO 85</scope>
</reference>
<name>KDSB_FRATT</name>
<feature type="chain" id="PRO_0000370071" description="3-deoxy-manno-octulosonate cytidylyltransferase">
    <location>
        <begin position="1"/>
        <end position="250"/>
    </location>
</feature>
<accession>Q5NEX8</accession>
<dbReference type="EC" id="2.7.7.38" evidence="1"/>
<dbReference type="EMBL" id="AJ749949">
    <property type="protein sequence ID" value="CAG46111.2"/>
    <property type="molecule type" value="Genomic_DNA"/>
</dbReference>
<dbReference type="RefSeq" id="WP_003022333.1">
    <property type="nucleotide sequence ID" value="NC_006570.2"/>
</dbReference>
<dbReference type="RefSeq" id="YP_170414.2">
    <property type="nucleotide sequence ID" value="NC_006570.2"/>
</dbReference>
<dbReference type="SMR" id="Q5NEX8"/>
<dbReference type="STRING" id="177416.FTT_1478c"/>
<dbReference type="DNASU" id="3192251"/>
<dbReference type="EnsemblBacteria" id="CAG46111">
    <property type="protein sequence ID" value="CAG46111"/>
    <property type="gene ID" value="FTT_1478c"/>
</dbReference>
<dbReference type="KEGG" id="ftu:FTT_1478c"/>
<dbReference type="eggNOG" id="COG1212">
    <property type="taxonomic scope" value="Bacteria"/>
</dbReference>
<dbReference type="OrthoDB" id="9815559at2"/>
<dbReference type="UniPathway" id="UPA00030"/>
<dbReference type="UniPathway" id="UPA00358">
    <property type="reaction ID" value="UER00476"/>
</dbReference>
<dbReference type="Proteomes" id="UP000001174">
    <property type="component" value="Chromosome"/>
</dbReference>
<dbReference type="GO" id="GO:0005829">
    <property type="term" value="C:cytosol"/>
    <property type="evidence" value="ECO:0007669"/>
    <property type="project" value="TreeGrafter"/>
</dbReference>
<dbReference type="GO" id="GO:0008690">
    <property type="term" value="F:3-deoxy-manno-octulosonate cytidylyltransferase activity"/>
    <property type="evidence" value="ECO:0007669"/>
    <property type="project" value="UniProtKB-UniRule"/>
</dbReference>
<dbReference type="GO" id="GO:0033468">
    <property type="term" value="P:CMP-keto-3-deoxy-D-manno-octulosonic acid biosynthetic process"/>
    <property type="evidence" value="ECO:0007669"/>
    <property type="project" value="UniProtKB-UniRule"/>
</dbReference>
<dbReference type="GO" id="GO:0009103">
    <property type="term" value="P:lipopolysaccharide biosynthetic process"/>
    <property type="evidence" value="ECO:0007669"/>
    <property type="project" value="UniProtKB-UniRule"/>
</dbReference>
<dbReference type="CDD" id="cd02517">
    <property type="entry name" value="CMP-KDO-Synthetase"/>
    <property type="match status" value="1"/>
</dbReference>
<dbReference type="FunFam" id="3.90.550.10:FF:000011">
    <property type="entry name" value="3-deoxy-manno-octulosonate cytidylyltransferase"/>
    <property type="match status" value="1"/>
</dbReference>
<dbReference type="Gene3D" id="3.90.550.10">
    <property type="entry name" value="Spore Coat Polysaccharide Biosynthesis Protein SpsA, Chain A"/>
    <property type="match status" value="1"/>
</dbReference>
<dbReference type="HAMAP" id="MF_00057">
    <property type="entry name" value="KdsB"/>
    <property type="match status" value="1"/>
</dbReference>
<dbReference type="InterPro" id="IPR003329">
    <property type="entry name" value="Cytidylyl_trans"/>
</dbReference>
<dbReference type="InterPro" id="IPR004528">
    <property type="entry name" value="KdsB"/>
</dbReference>
<dbReference type="InterPro" id="IPR029044">
    <property type="entry name" value="Nucleotide-diphossugar_trans"/>
</dbReference>
<dbReference type="NCBIfam" id="TIGR00466">
    <property type="entry name" value="kdsB"/>
    <property type="match status" value="1"/>
</dbReference>
<dbReference type="NCBIfam" id="NF003950">
    <property type="entry name" value="PRK05450.1-3"/>
    <property type="match status" value="1"/>
</dbReference>
<dbReference type="NCBIfam" id="NF003952">
    <property type="entry name" value="PRK05450.1-5"/>
    <property type="match status" value="1"/>
</dbReference>
<dbReference type="NCBIfam" id="NF009905">
    <property type="entry name" value="PRK13368.1"/>
    <property type="match status" value="1"/>
</dbReference>
<dbReference type="PANTHER" id="PTHR42866">
    <property type="entry name" value="3-DEOXY-MANNO-OCTULOSONATE CYTIDYLYLTRANSFERASE"/>
    <property type="match status" value="1"/>
</dbReference>
<dbReference type="PANTHER" id="PTHR42866:SF2">
    <property type="entry name" value="3-DEOXY-MANNO-OCTULOSONATE CYTIDYLYLTRANSFERASE, MITOCHONDRIAL"/>
    <property type="match status" value="1"/>
</dbReference>
<dbReference type="Pfam" id="PF02348">
    <property type="entry name" value="CTP_transf_3"/>
    <property type="match status" value="1"/>
</dbReference>
<dbReference type="SUPFAM" id="SSF53448">
    <property type="entry name" value="Nucleotide-diphospho-sugar transferases"/>
    <property type="match status" value="1"/>
</dbReference>